<comment type="function">
    <text evidence="3">Odorant receptor.</text>
</comment>
<comment type="subcellular location">
    <subcellularLocation>
        <location>Cell membrane</location>
        <topology>Multi-pass membrane protein</topology>
    </subcellularLocation>
</comment>
<comment type="similarity">
    <text evidence="2">Belongs to the G-protein coupled receptor 1 family.</text>
</comment>
<comment type="online information" name="Human Olfactory Receptor Data Exploratorium (HORDE)">
    <link uri="http://genome.weizmann.ac.il/horde/card/index/symbol:OR8U1"/>
</comment>
<accession>Q8NH10</accession>
<evidence type="ECO:0000255" key="1"/>
<evidence type="ECO:0000255" key="2">
    <source>
        <dbReference type="PROSITE-ProRule" id="PRU00521"/>
    </source>
</evidence>
<evidence type="ECO:0000305" key="3"/>
<organism>
    <name type="scientific">Homo sapiens</name>
    <name type="common">Human</name>
    <dbReference type="NCBI Taxonomy" id="9606"/>
    <lineage>
        <taxon>Eukaryota</taxon>
        <taxon>Metazoa</taxon>
        <taxon>Chordata</taxon>
        <taxon>Craniata</taxon>
        <taxon>Vertebrata</taxon>
        <taxon>Euteleostomi</taxon>
        <taxon>Mammalia</taxon>
        <taxon>Eutheria</taxon>
        <taxon>Euarchontoglires</taxon>
        <taxon>Primates</taxon>
        <taxon>Haplorrhini</taxon>
        <taxon>Catarrhini</taxon>
        <taxon>Hominidae</taxon>
        <taxon>Homo</taxon>
    </lineage>
</organism>
<keyword id="KW-1003">Cell membrane</keyword>
<keyword id="KW-1015">Disulfide bond</keyword>
<keyword id="KW-0297">G-protein coupled receptor</keyword>
<keyword id="KW-0325">Glycoprotein</keyword>
<keyword id="KW-0472">Membrane</keyword>
<keyword id="KW-0552">Olfaction</keyword>
<keyword id="KW-0675">Receptor</keyword>
<keyword id="KW-1185">Reference proteome</keyword>
<keyword id="KW-0716">Sensory transduction</keyword>
<keyword id="KW-0807">Transducer</keyword>
<keyword id="KW-0812">Transmembrane</keyword>
<keyword id="KW-1133">Transmembrane helix</keyword>
<name>OR8U1_HUMAN</name>
<proteinExistence type="inferred from homology"/>
<reference key="1">
    <citation type="submission" date="2001-07" db="EMBL/GenBank/DDBJ databases">
        <title>Genome-wide discovery and analysis of human seven transmembrane helix receptor genes.</title>
        <authorList>
            <person name="Suwa M."/>
            <person name="Sato T."/>
            <person name="Okouchi I."/>
            <person name="Arita M."/>
            <person name="Futami K."/>
            <person name="Matsumoto S."/>
            <person name="Tsutsumi S."/>
            <person name="Aburatani H."/>
            <person name="Asai K."/>
            <person name="Akiyama Y."/>
        </authorList>
    </citation>
    <scope>NUCLEOTIDE SEQUENCE [GENOMIC DNA]</scope>
</reference>
<protein>
    <recommendedName>
        <fullName>Olfactory receptor 8U1</fullName>
    </recommendedName>
</protein>
<gene>
    <name type="primary">OR8U1</name>
</gene>
<dbReference type="EMBL" id="AB065603">
    <property type="protein sequence ID" value="BAC05831.1"/>
    <property type="molecule type" value="Genomic_DNA"/>
</dbReference>
<dbReference type="CCDS" id="CCDS41647.1"/>
<dbReference type="RefSeq" id="NP_001005204.1">
    <property type="nucleotide sequence ID" value="NM_001005204.1"/>
</dbReference>
<dbReference type="SMR" id="Q8NH10"/>
<dbReference type="BioGRID" id="128529">
    <property type="interactions" value="1"/>
</dbReference>
<dbReference type="FunCoup" id="Q8NH10">
    <property type="interactions" value="417"/>
</dbReference>
<dbReference type="STRING" id="9606.ENSP00000304188"/>
<dbReference type="GlyCosmos" id="Q8NH10">
    <property type="glycosylation" value="1 site, No reported glycans"/>
</dbReference>
<dbReference type="GlyGen" id="Q8NH10">
    <property type="glycosylation" value="1 site"/>
</dbReference>
<dbReference type="BioMuta" id="OR8U1"/>
<dbReference type="DMDM" id="74762588"/>
<dbReference type="jPOST" id="Q8NH10"/>
<dbReference type="PaxDb" id="9606-ENSP00000304188"/>
<dbReference type="PeptideAtlas" id="Q8NH10"/>
<dbReference type="Antibodypedia" id="58979">
    <property type="antibodies" value="34 antibodies from 10 providers"/>
</dbReference>
<dbReference type="DNASU" id="219417"/>
<dbReference type="Ensembl" id="ENST00000302270.1">
    <property type="protein sequence ID" value="ENSP00000304188.1"/>
    <property type="gene ID" value="ENSG00000172199.1"/>
</dbReference>
<dbReference type="Ensembl" id="ENST00000708996.1">
    <property type="protein sequence ID" value="ENSP00000517450.1"/>
    <property type="gene ID" value="ENSG00000291846.1"/>
</dbReference>
<dbReference type="GeneID" id="219417"/>
<dbReference type="KEGG" id="hsa:219417"/>
<dbReference type="MANE-Select" id="ENST00000302270.1">
    <property type="protein sequence ID" value="ENSP00000304188.1"/>
    <property type="RefSeq nucleotide sequence ID" value="NM_001005204.1"/>
    <property type="RefSeq protein sequence ID" value="NP_001005204.1"/>
</dbReference>
<dbReference type="UCSC" id="uc031xpd.1">
    <property type="organism name" value="human"/>
</dbReference>
<dbReference type="AGR" id="HGNC:19611"/>
<dbReference type="CTD" id="219417"/>
<dbReference type="DisGeNET" id="219417"/>
<dbReference type="GeneCards" id="OR8U1"/>
<dbReference type="HGNC" id="HGNC:19611">
    <property type="gene designation" value="OR8U1"/>
</dbReference>
<dbReference type="HPA" id="ENSG00000172199">
    <property type="expression patterns" value="Not detected"/>
</dbReference>
<dbReference type="neXtProt" id="NX_Q8NH10"/>
<dbReference type="OpenTargets" id="ENSG00000172199"/>
<dbReference type="PharmGKB" id="PA134970669"/>
<dbReference type="VEuPathDB" id="HostDB:ENSG00000172199"/>
<dbReference type="eggNOG" id="ENOG502RF3K">
    <property type="taxonomic scope" value="Eukaryota"/>
</dbReference>
<dbReference type="GeneTree" id="ENSGT00950000182718"/>
<dbReference type="HOGENOM" id="CLU_012526_8_1_1"/>
<dbReference type="InParanoid" id="Q8NH10"/>
<dbReference type="OMA" id="NQAFMFM"/>
<dbReference type="OrthoDB" id="17162at9604"/>
<dbReference type="PAN-GO" id="Q8NH10">
    <property type="GO annotations" value="4 GO annotations based on evolutionary models"/>
</dbReference>
<dbReference type="PhylomeDB" id="Q8NH10"/>
<dbReference type="TreeFam" id="TF352753"/>
<dbReference type="PathwayCommons" id="Q8NH10"/>
<dbReference type="Reactome" id="R-HSA-9752946">
    <property type="pathway name" value="Expression and translocation of olfactory receptors"/>
</dbReference>
<dbReference type="BioGRID-ORCS" id="219417">
    <property type="hits" value="10 hits in 711 CRISPR screens"/>
</dbReference>
<dbReference type="ChiTaRS" id="OR8U1">
    <property type="organism name" value="human"/>
</dbReference>
<dbReference type="GenomeRNAi" id="219417"/>
<dbReference type="Pharos" id="Q8NH10">
    <property type="development level" value="Tdark"/>
</dbReference>
<dbReference type="PRO" id="PR:Q8NH10"/>
<dbReference type="Proteomes" id="UP000005640">
    <property type="component" value="Chromosome 11"/>
</dbReference>
<dbReference type="RNAct" id="Q8NH10">
    <property type="molecule type" value="protein"/>
</dbReference>
<dbReference type="Bgee" id="ENSG00000172199">
    <property type="expression patterns" value="Expressed in male germ line stem cell (sensu Vertebrata) in testis and 4 other cell types or tissues"/>
</dbReference>
<dbReference type="GO" id="GO:0005886">
    <property type="term" value="C:plasma membrane"/>
    <property type="evidence" value="ECO:0007669"/>
    <property type="project" value="UniProtKB-SubCell"/>
</dbReference>
<dbReference type="GO" id="GO:0004930">
    <property type="term" value="F:G protein-coupled receptor activity"/>
    <property type="evidence" value="ECO:0007669"/>
    <property type="project" value="UniProtKB-KW"/>
</dbReference>
<dbReference type="GO" id="GO:0004984">
    <property type="term" value="F:olfactory receptor activity"/>
    <property type="evidence" value="ECO:0007669"/>
    <property type="project" value="InterPro"/>
</dbReference>
<dbReference type="CDD" id="cd15413">
    <property type="entry name" value="7tmA_OR8K-like"/>
    <property type="match status" value="1"/>
</dbReference>
<dbReference type="FunFam" id="1.10.1220.70:FF:000001">
    <property type="entry name" value="Olfactory receptor"/>
    <property type="match status" value="1"/>
</dbReference>
<dbReference type="FunFam" id="1.20.1070.10:FF:000004">
    <property type="entry name" value="Olfactory receptor"/>
    <property type="match status" value="1"/>
</dbReference>
<dbReference type="Gene3D" id="1.20.1070.10">
    <property type="entry name" value="Rhodopsin 7-helix transmembrane proteins"/>
    <property type="match status" value="1"/>
</dbReference>
<dbReference type="InterPro" id="IPR000276">
    <property type="entry name" value="GPCR_Rhodpsn"/>
</dbReference>
<dbReference type="InterPro" id="IPR017452">
    <property type="entry name" value="GPCR_Rhodpsn_7TM"/>
</dbReference>
<dbReference type="InterPro" id="IPR000725">
    <property type="entry name" value="Olfact_rcpt"/>
</dbReference>
<dbReference type="PANTHER" id="PTHR48018">
    <property type="entry name" value="OLFACTORY RECEPTOR"/>
    <property type="match status" value="1"/>
</dbReference>
<dbReference type="Pfam" id="PF13853">
    <property type="entry name" value="7tm_4"/>
    <property type="match status" value="1"/>
</dbReference>
<dbReference type="PRINTS" id="PR00237">
    <property type="entry name" value="GPCRRHODOPSN"/>
</dbReference>
<dbReference type="PRINTS" id="PR00245">
    <property type="entry name" value="OLFACTORYR"/>
</dbReference>
<dbReference type="SUPFAM" id="SSF81321">
    <property type="entry name" value="Family A G protein-coupled receptor-like"/>
    <property type="match status" value="1"/>
</dbReference>
<dbReference type="PROSITE" id="PS00237">
    <property type="entry name" value="G_PROTEIN_RECEP_F1_1"/>
    <property type="match status" value="1"/>
</dbReference>
<dbReference type="PROSITE" id="PS50262">
    <property type="entry name" value="G_PROTEIN_RECEP_F1_2"/>
    <property type="match status" value="1"/>
</dbReference>
<feature type="chain" id="PRO_0000150675" description="Olfactory receptor 8U1">
    <location>
        <begin position="1"/>
        <end position="309"/>
    </location>
</feature>
<feature type="topological domain" description="Extracellular" evidence="1">
    <location>
        <begin position="1"/>
        <end position="25"/>
    </location>
</feature>
<feature type="transmembrane region" description="Helical; Name=1" evidence="1">
    <location>
        <begin position="26"/>
        <end position="46"/>
    </location>
</feature>
<feature type="topological domain" description="Cytoplasmic" evidence="1">
    <location>
        <begin position="47"/>
        <end position="54"/>
    </location>
</feature>
<feature type="transmembrane region" description="Helical; Name=2" evidence="1">
    <location>
        <begin position="55"/>
        <end position="75"/>
    </location>
</feature>
<feature type="topological domain" description="Extracellular" evidence="1">
    <location>
        <begin position="76"/>
        <end position="99"/>
    </location>
</feature>
<feature type="transmembrane region" description="Helical; Name=3" evidence="1">
    <location>
        <begin position="100"/>
        <end position="120"/>
    </location>
</feature>
<feature type="topological domain" description="Cytoplasmic" evidence="1">
    <location>
        <begin position="121"/>
        <end position="139"/>
    </location>
</feature>
<feature type="transmembrane region" description="Helical; Name=4" evidence="1">
    <location>
        <begin position="140"/>
        <end position="160"/>
    </location>
</feature>
<feature type="topological domain" description="Extracellular" evidence="1">
    <location>
        <begin position="161"/>
        <end position="197"/>
    </location>
</feature>
<feature type="transmembrane region" description="Helical; Name=5" evidence="1">
    <location>
        <begin position="198"/>
        <end position="217"/>
    </location>
</feature>
<feature type="topological domain" description="Cytoplasmic" evidence="1">
    <location>
        <begin position="218"/>
        <end position="237"/>
    </location>
</feature>
<feature type="transmembrane region" description="Helical; Name=6" evidence="1">
    <location>
        <begin position="238"/>
        <end position="258"/>
    </location>
</feature>
<feature type="topological domain" description="Extracellular" evidence="1">
    <location>
        <begin position="259"/>
        <end position="271"/>
    </location>
</feature>
<feature type="transmembrane region" description="Helical; Name=7" evidence="1">
    <location>
        <begin position="272"/>
        <end position="292"/>
    </location>
</feature>
<feature type="topological domain" description="Cytoplasmic" evidence="1">
    <location>
        <begin position="293"/>
        <end position="309"/>
    </location>
</feature>
<feature type="glycosylation site" description="N-linked (GlcNAc...) asparagine" evidence="1">
    <location>
        <position position="5"/>
    </location>
</feature>
<feature type="disulfide bond" evidence="2">
    <location>
        <begin position="97"/>
        <end position="189"/>
    </location>
</feature>
<feature type="sequence variant" id="VAR_053247" description="In dbSNP:rs11228166.">
    <original>H</original>
    <variation>R</variation>
    <location>
        <position position="20"/>
    </location>
</feature>
<feature type="sequence variant" id="VAR_053248" description="In dbSNP:rs12788990.">
    <original>I</original>
    <variation>V</variation>
    <location>
        <position position="109"/>
    </location>
</feature>
<feature type="sequence variant" id="VAR_053249" description="In dbSNP:rs10791961.">
    <original>S</original>
    <variation>C</variation>
    <location>
        <position position="112"/>
    </location>
</feature>
<feature type="sequence variant" id="VAR_060014" description="In dbSNP:rs10791962.">
    <original>T</original>
    <variation>S</variation>
    <location>
        <position position="137"/>
    </location>
</feature>
<feature type="sequence variant" id="VAR_053250" description="In dbSNP:rs17150411.">
    <original>R</original>
    <variation>C</variation>
    <location>
        <position position="165"/>
    </location>
</feature>
<feature type="sequence variant" id="VAR_060015" description="In dbSNP:rs10896310.">
    <original>M</original>
    <variation>I</variation>
    <location>
        <position position="206"/>
    </location>
</feature>
<feature type="sequence variant" id="VAR_060016" description="In dbSNP:rs10896309.">
    <original>M</original>
    <variation>T</variation>
    <location>
        <position position="206"/>
    </location>
</feature>
<feature type="sequence variant" id="VAR_053251" description="In dbSNP:rs1573509.">
    <original>L</original>
    <variation>V</variation>
    <location>
        <position position="288"/>
    </location>
</feature>
<feature type="sequence variant" id="VAR_053252" description="In dbSNP:rs12272403.">
    <original>Q</original>
    <variation>R</variation>
    <location>
        <position position="293"/>
    </location>
</feature>
<sequence>MAHINCTQATEFILVGLTDHQELKMPLFVLFLSIYLFTVVGNLGLILLIRADTSLNTPMYFFLSNLAFVDFCYSSVITPKMLGNFLYKQNVISFDACATQLGCFLTFMISESLLLASMAYDRYVAICNPLLYMVVMTPGICIQLVAVPYSYSFLMALFHTILTFRLSYCHSNIVNHFYCDDMPLLRLTCSDTRFKQLWIFACAGIMFISSLLIVFVSYMFIISAILRMHSAEGRQKAFSTCGSHMLAVTIFYGTLIFMYLQPSSSHALDTDKMASVFYTVIIPMLNPLIYSLQNKEVKEALKKIIINKN</sequence>